<accession>Q9NX38</accession>
<accession>Q5JTR0</accession>
<accession>Q5JTR1</accession>
<evidence type="ECO:0000250" key="1">
    <source>
        <dbReference type="UniProtKB" id="Q80ZQ9"/>
    </source>
</evidence>
<evidence type="ECO:0000305" key="2"/>
<evidence type="ECO:0000305" key="3">
    <source>
    </source>
</evidence>
<evidence type="ECO:0000312" key="4">
    <source>
        <dbReference type="HGNC" id="HGNC:1364"/>
    </source>
</evidence>
<organism>
    <name type="scientific">Homo sapiens</name>
    <name type="common">Human</name>
    <dbReference type="NCBI Taxonomy" id="9606"/>
    <lineage>
        <taxon>Eukaryota</taxon>
        <taxon>Metazoa</taxon>
        <taxon>Chordata</taxon>
        <taxon>Craniata</taxon>
        <taxon>Vertebrata</taxon>
        <taxon>Euteleostomi</taxon>
        <taxon>Mammalia</taxon>
        <taxon>Eutheria</taxon>
        <taxon>Euarchontoglires</taxon>
        <taxon>Primates</taxon>
        <taxon>Haplorrhini</taxon>
        <taxon>Catarrhini</taxon>
        <taxon>Hominidae</taxon>
        <taxon>Homo</taxon>
    </lineage>
</organism>
<proteinExistence type="evidence at protein level"/>
<reference key="1">
    <citation type="submission" date="1999-05" db="EMBL/GenBank/DDBJ databases">
        <title>Isolation and characterization of a novel human transcript in the familial dysautonomia candidate region on human chromosome 9q31.</title>
        <authorList>
            <person name="Mull J."/>
            <person name="Leyne M."/>
            <person name="Gill S."/>
            <person name="Liebert C.B."/>
            <person name="Chadwick B.P."/>
            <person name="Gusella J.F."/>
            <person name="Slaugenhaupt S.A."/>
        </authorList>
    </citation>
    <scope>NUCLEOTIDE SEQUENCE [MRNA]</scope>
</reference>
<reference key="2">
    <citation type="journal article" date="2004" name="Nat. Genet.">
        <title>Complete sequencing and characterization of 21,243 full-length human cDNAs.</title>
        <authorList>
            <person name="Ota T."/>
            <person name="Suzuki Y."/>
            <person name="Nishikawa T."/>
            <person name="Otsuki T."/>
            <person name="Sugiyama T."/>
            <person name="Irie R."/>
            <person name="Wakamatsu A."/>
            <person name="Hayashi K."/>
            <person name="Sato H."/>
            <person name="Nagai K."/>
            <person name="Kimura K."/>
            <person name="Makita H."/>
            <person name="Sekine M."/>
            <person name="Obayashi M."/>
            <person name="Nishi T."/>
            <person name="Shibahara T."/>
            <person name="Tanaka T."/>
            <person name="Ishii S."/>
            <person name="Yamamoto J."/>
            <person name="Saito K."/>
            <person name="Kawai Y."/>
            <person name="Isono Y."/>
            <person name="Nakamura Y."/>
            <person name="Nagahari K."/>
            <person name="Murakami K."/>
            <person name="Yasuda T."/>
            <person name="Iwayanagi T."/>
            <person name="Wagatsuma M."/>
            <person name="Shiratori A."/>
            <person name="Sudo H."/>
            <person name="Hosoiri T."/>
            <person name="Kaku Y."/>
            <person name="Kodaira H."/>
            <person name="Kondo H."/>
            <person name="Sugawara M."/>
            <person name="Takahashi M."/>
            <person name="Kanda K."/>
            <person name="Yokoi T."/>
            <person name="Furuya T."/>
            <person name="Kikkawa E."/>
            <person name="Omura Y."/>
            <person name="Abe K."/>
            <person name="Kamihara K."/>
            <person name="Katsuta N."/>
            <person name="Sato K."/>
            <person name="Tanikawa M."/>
            <person name="Yamazaki M."/>
            <person name="Ninomiya K."/>
            <person name="Ishibashi T."/>
            <person name="Yamashita H."/>
            <person name="Murakawa K."/>
            <person name="Fujimori K."/>
            <person name="Tanai H."/>
            <person name="Kimata M."/>
            <person name="Watanabe M."/>
            <person name="Hiraoka S."/>
            <person name="Chiba Y."/>
            <person name="Ishida S."/>
            <person name="Ono Y."/>
            <person name="Takiguchi S."/>
            <person name="Watanabe S."/>
            <person name="Yosida M."/>
            <person name="Hotuta T."/>
            <person name="Kusano J."/>
            <person name="Kanehori K."/>
            <person name="Takahashi-Fujii A."/>
            <person name="Hara H."/>
            <person name="Tanase T.-O."/>
            <person name="Nomura Y."/>
            <person name="Togiya S."/>
            <person name="Komai F."/>
            <person name="Hara R."/>
            <person name="Takeuchi K."/>
            <person name="Arita M."/>
            <person name="Imose N."/>
            <person name="Musashino K."/>
            <person name="Yuuki H."/>
            <person name="Oshima A."/>
            <person name="Sasaki N."/>
            <person name="Aotsuka S."/>
            <person name="Yoshikawa Y."/>
            <person name="Matsunawa H."/>
            <person name="Ichihara T."/>
            <person name="Shiohata N."/>
            <person name="Sano S."/>
            <person name="Moriya S."/>
            <person name="Momiyama H."/>
            <person name="Satoh N."/>
            <person name="Takami S."/>
            <person name="Terashima Y."/>
            <person name="Suzuki O."/>
            <person name="Nakagawa S."/>
            <person name="Senoh A."/>
            <person name="Mizoguchi H."/>
            <person name="Goto Y."/>
            <person name="Shimizu F."/>
            <person name="Wakebe H."/>
            <person name="Hishigaki H."/>
            <person name="Watanabe T."/>
            <person name="Sugiyama A."/>
            <person name="Takemoto M."/>
            <person name="Kawakami B."/>
            <person name="Yamazaki M."/>
            <person name="Watanabe K."/>
            <person name="Kumagai A."/>
            <person name="Itakura S."/>
            <person name="Fukuzumi Y."/>
            <person name="Fujimori Y."/>
            <person name="Komiyama M."/>
            <person name="Tashiro H."/>
            <person name="Tanigami A."/>
            <person name="Fujiwara T."/>
            <person name="Ono T."/>
            <person name="Yamada K."/>
            <person name="Fujii Y."/>
            <person name="Ozaki K."/>
            <person name="Hirao M."/>
            <person name="Ohmori Y."/>
            <person name="Kawabata A."/>
            <person name="Hikiji T."/>
            <person name="Kobatake N."/>
            <person name="Inagaki H."/>
            <person name="Ikema Y."/>
            <person name="Okamoto S."/>
            <person name="Okitani R."/>
            <person name="Kawakami T."/>
            <person name="Noguchi S."/>
            <person name="Itoh T."/>
            <person name="Shigeta K."/>
            <person name="Senba T."/>
            <person name="Matsumura K."/>
            <person name="Nakajima Y."/>
            <person name="Mizuno T."/>
            <person name="Morinaga M."/>
            <person name="Sasaki M."/>
            <person name="Togashi T."/>
            <person name="Oyama M."/>
            <person name="Hata H."/>
            <person name="Watanabe M."/>
            <person name="Komatsu T."/>
            <person name="Mizushima-Sugano J."/>
            <person name="Satoh T."/>
            <person name="Shirai Y."/>
            <person name="Takahashi Y."/>
            <person name="Nakagawa K."/>
            <person name="Okumura K."/>
            <person name="Nagase T."/>
            <person name="Nomura N."/>
            <person name="Kikuchi H."/>
            <person name="Masuho Y."/>
            <person name="Yamashita R."/>
            <person name="Nakai K."/>
            <person name="Yada T."/>
            <person name="Nakamura Y."/>
            <person name="Ohara O."/>
            <person name="Isogai T."/>
            <person name="Sugano S."/>
        </authorList>
    </citation>
    <scope>NUCLEOTIDE SEQUENCE [LARGE SCALE MRNA]</scope>
</reference>
<reference key="3">
    <citation type="journal article" date="2004" name="Nature">
        <title>DNA sequence and analysis of human chromosome 9.</title>
        <authorList>
            <person name="Humphray S.J."/>
            <person name="Oliver K."/>
            <person name="Hunt A.R."/>
            <person name="Plumb R.W."/>
            <person name="Loveland J.E."/>
            <person name="Howe K.L."/>
            <person name="Andrews T.D."/>
            <person name="Searle S."/>
            <person name="Hunt S.E."/>
            <person name="Scott C.E."/>
            <person name="Jones M.C."/>
            <person name="Ainscough R."/>
            <person name="Almeida J.P."/>
            <person name="Ambrose K.D."/>
            <person name="Ashwell R.I.S."/>
            <person name="Babbage A.K."/>
            <person name="Babbage S."/>
            <person name="Bagguley C.L."/>
            <person name="Bailey J."/>
            <person name="Banerjee R."/>
            <person name="Barker D.J."/>
            <person name="Barlow K.F."/>
            <person name="Bates K."/>
            <person name="Beasley H."/>
            <person name="Beasley O."/>
            <person name="Bird C.P."/>
            <person name="Bray-Allen S."/>
            <person name="Brown A.J."/>
            <person name="Brown J.Y."/>
            <person name="Burford D."/>
            <person name="Burrill W."/>
            <person name="Burton J."/>
            <person name="Carder C."/>
            <person name="Carter N.P."/>
            <person name="Chapman J.C."/>
            <person name="Chen Y."/>
            <person name="Clarke G."/>
            <person name="Clark S.Y."/>
            <person name="Clee C.M."/>
            <person name="Clegg S."/>
            <person name="Collier R.E."/>
            <person name="Corby N."/>
            <person name="Crosier M."/>
            <person name="Cummings A.T."/>
            <person name="Davies J."/>
            <person name="Dhami P."/>
            <person name="Dunn M."/>
            <person name="Dutta I."/>
            <person name="Dyer L.W."/>
            <person name="Earthrowl M.E."/>
            <person name="Faulkner L."/>
            <person name="Fleming C.J."/>
            <person name="Frankish A."/>
            <person name="Frankland J.A."/>
            <person name="French L."/>
            <person name="Fricker D.G."/>
            <person name="Garner P."/>
            <person name="Garnett J."/>
            <person name="Ghori J."/>
            <person name="Gilbert J.G.R."/>
            <person name="Glison C."/>
            <person name="Grafham D.V."/>
            <person name="Gribble S."/>
            <person name="Griffiths C."/>
            <person name="Griffiths-Jones S."/>
            <person name="Grocock R."/>
            <person name="Guy J."/>
            <person name="Hall R.E."/>
            <person name="Hammond S."/>
            <person name="Harley J.L."/>
            <person name="Harrison E.S.I."/>
            <person name="Hart E.A."/>
            <person name="Heath P.D."/>
            <person name="Henderson C.D."/>
            <person name="Hopkins B.L."/>
            <person name="Howard P.J."/>
            <person name="Howden P.J."/>
            <person name="Huckle E."/>
            <person name="Johnson C."/>
            <person name="Johnson D."/>
            <person name="Joy A.A."/>
            <person name="Kay M."/>
            <person name="Keenan S."/>
            <person name="Kershaw J.K."/>
            <person name="Kimberley A.M."/>
            <person name="King A."/>
            <person name="Knights A."/>
            <person name="Laird G.K."/>
            <person name="Langford C."/>
            <person name="Lawlor S."/>
            <person name="Leongamornlert D.A."/>
            <person name="Leversha M."/>
            <person name="Lloyd C."/>
            <person name="Lloyd D.M."/>
            <person name="Lovell J."/>
            <person name="Martin S."/>
            <person name="Mashreghi-Mohammadi M."/>
            <person name="Matthews L."/>
            <person name="McLaren S."/>
            <person name="McLay K.E."/>
            <person name="McMurray A."/>
            <person name="Milne S."/>
            <person name="Nickerson T."/>
            <person name="Nisbett J."/>
            <person name="Nordsiek G."/>
            <person name="Pearce A.V."/>
            <person name="Peck A.I."/>
            <person name="Porter K.M."/>
            <person name="Pandian R."/>
            <person name="Pelan S."/>
            <person name="Phillimore B."/>
            <person name="Povey S."/>
            <person name="Ramsey Y."/>
            <person name="Rand V."/>
            <person name="Scharfe M."/>
            <person name="Sehra H.K."/>
            <person name="Shownkeen R."/>
            <person name="Sims S.K."/>
            <person name="Skuce C.D."/>
            <person name="Smith M."/>
            <person name="Steward C.A."/>
            <person name="Swarbreck D."/>
            <person name="Sycamore N."/>
            <person name="Tester J."/>
            <person name="Thorpe A."/>
            <person name="Tracey A."/>
            <person name="Tromans A."/>
            <person name="Thomas D.W."/>
            <person name="Wall M."/>
            <person name="Wallis J.M."/>
            <person name="West A.P."/>
            <person name="Whitehead S.L."/>
            <person name="Willey D.L."/>
            <person name="Williams S.A."/>
            <person name="Wilming L."/>
            <person name="Wray P.W."/>
            <person name="Young L."/>
            <person name="Ashurst J.L."/>
            <person name="Coulson A."/>
            <person name="Blocker H."/>
            <person name="Durbin R.M."/>
            <person name="Sulston J.E."/>
            <person name="Hubbard T."/>
            <person name="Jackson M.J."/>
            <person name="Bentley D.R."/>
            <person name="Beck S."/>
            <person name="Rogers J."/>
            <person name="Dunham I."/>
        </authorList>
    </citation>
    <scope>NUCLEOTIDE SEQUENCE [LARGE SCALE GENOMIC DNA]</scope>
</reference>
<reference key="4">
    <citation type="journal article" date="2004" name="Genome Res.">
        <title>The status, quality, and expansion of the NIH full-length cDNA project: the Mammalian Gene Collection (MGC).</title>
        <authorList>
            <consortium name="The MGC Project Team"/>
        </authorList>
    </citation>
    <scope>NUCLEOTIDE SEQUENCE [LARGE SCALE MRNA]</scope>
    <source>
        <tissue>Uterus</tissue>
    </source>
</reference>
<reference key="5">
    <citation type="journal article" date="2013" name="PLoS ONE">
        <title>Identification and characterisation of Simiate, a novel protein linked to the fragile X syndrome.</title>
        <authorList>
            <person name="Derlig K."/>
            <person name="Giessl A."/>
            <person name="Brandstatter J.H."/>
            <person name="Enz R."/>
            <person name="Dahlhaus R."/>
        </authorList>
    </citation>
    <scope>DEPLETION</scope>
</reference>
<feature type="chain" id="PRO_0000291928" description="Protein Abitram">
    <location>
        <begin position="1"/>
        <end position="181"/>
    </location>
</feature>
<sequence length="181" mass="20378">MATEPEAAEPVVPSLVDRYFTRWYKPDVKGKFCEDHCILQHSNRICVITLAESHPVLQSGKTIKSISYQISTNCSRLQNKVSGKFKRGAQFLTELAPLCKIYCSDGEEYTVSSCVRGRLMEVNENILHKPSILQEKPSTEGYIAVVLPKFEESKSITEGLLTQKQYEEVMVKRINATTATS</sequence>
<name>ABITM_HUMAN</name>
<comment type="function">
    <text evidence="1">Actin-binding protein that regulates actin polymerization, filopodia dynamics and increases the branching of proximal dendrites of developing neurons.</text>
</comment>
<comment type="subunit">
    <text evidence="1">Interacts with F-actin (By similarity). Interacts with G-actin (By similarity).</text>
</comment>
<comment type="interaction">
    <interactant intactId="EBI-9105722">
        <id>Q9NX38</id>
    </interactant>
    <interactant intactId="EBI-10216552">
        <id>Q8IY42</id>
        <label>C4orf19</label>
    </interactant>
    <organismsDiffer>false</organismsDiffer>
    <experiments>3</experiments>
</comment>
<comment type="interaction">
    <interactant intactId="EBI-9105722">
        <id>Q9NX38</id>
    </interactant>
    <interactant intactId="EBI-2549423">
        <id>Q6NT76</id>
        <label>HMBOX1</label>
    </interactant>
    <organismsDiffer>false</organismsDiffer>
    <experiments>6</experiments>
</comment>
<comment type="interaction">
    <interactant intactId="EBI-9105722">
        <id>Q9NX38</id>
    </interactant>
    <interactant intactId="EBI-6165891">
        <id>Q14696</id>
        <label>MESD</label>
    </interactant>
    <organismsDiffer>false</organismsDiffer>
    <experiments>3</experiments>
</comment>
<comment type="interaction">
    <interactant intactId="EBI-9105722">
        <id>Q9NX38</id>
    </interactant>
    <interactant intactId="EBI-11983583">
        <id>Q3MIT2</id>
        <label>PUS10</label>
    </interactant>
    <organismsDiffer>false</organismsDiffer>
    <experiments>9</experiments>
</comment>
<comment type="subcellular location">
    <subcellularLocation>
        <location evidence="1">Nucleus speckle</location>
    </subcellularLocation>
    <subcellularLocation>
        <location evidence="1">Cell projection</location>
        <location evidence="1">Lamellipodium</location>
    </subcellularLocation>
    <subcellularLocation>
        <location evidence="1">Nucleus</location>
    </subcellularLocation>
    <subcellularLocation>
        <location evidence="1">Cell projection</location>
        <location evidence="1">Growth cone</location>
    </subcellularLocation>
    <subcellularLocation>
        <location evidence="1">Cell projection</location>
        <location evidence="1">Dendrite</location>
    </subcellularLocation>
    <text evidence="1">Localizes to somata and dendrites in cortical neurons (By similarity). Colocalizes with G- and F-actin in lamellipodia (By similarity). Colocalizes in the nucleus with PTK2 (By similarity).</text>
</comment>
<comment type="miscellaneous">
    <text evidence="3">Depletion of ABITRAM by siRNA or neutralizing antibodies results in cell death within a few hours.</text>
</comment>
<comment type="similarity">
    <text evidence="2">Belongs to the ABITRAM family.</text>
</comment>
<dbReference type="EMBL" id="AF153417">
    <property type="protein sequence ID" value="AAG43367.1"/>
    <property type="molecule type" value="mRNA"/>
</dbReference>
<dbReference type="EMBL" id="AK000464">
    <property type="protein sequence ID" value="BAA91183.1"/>
    <property type="molecule type" value="mRNA"/>
</dbReference>
<dbReference type="EMBL" id="AL354797">
    <property type="status" value="NOT_ANNOTATED_CDS"/>
    <property type="molecule type" value="Genomic_DNA"/>
</dbReference>
<dbReference type="EMBL" id="BC015795">
    <property type="protein sequence ID" value="AAH15795.1"/>
    <property type="molecule type" value="mRNA"/>
</dbReference>
<dbReference type="CCDS" id="CCDS6774.1"/>
<dbReference type="RefSeq" id="NP_060302.1">
    <property type="nucleotide sequence ID" value="NM_017832.4"/>
</dbReference>
<dbReference type="SMR" id="Q9NX38"/>
<dbReference type="BioGRID" id="120282">
    <property type="interactions" value="19"/>
</dbReference>
<dbReference type="FunCoup" id="Q9NX38">
    <property type="interactions" value="1053"/>
</dbReference>
<dbReference type="IntAct" id="Q9NX38">
    <property type="interactions" value="13"/>
</dbReference>
<dbReference type="STRING" id="9606.ENSP00000363753"/>
<dbReference type="iPTMnet" id="Q9NX38"/>
<dbReference type="PhosphoSitePlus" id="Q9NX38"/>
<dbReference type="BioMuta" id="FAM206A"/>
<dbReference type="DMDM" id="74753037"/>
<dbReference type="jPOST" id="Q9NX38"/>
<dbReference type="MassIVE" id="Q9NX38"/>
<dbReference type="PaxDb" id="9606-ENSP00000363753"/>
<dbReference type="PeptideAtlas" id="Q9NX38"/>
<dbReference type="ProteomicsDB" id="83030"/>
<dbReference type="Pumba" id="Q9NX38"/>
<dbReference type="Antibodypedia" id="29387">
    <property type="antibodies" value="54 antibodies from 9 providers"/>
</dbReference>
<dbReference type="DNASU" id="54942"/>
<dbReference type="Ensembl" id="ENST00000322940.11">
    <property type="protein sequence ID" value="ENSP00000363753.3"/>
    <property type="gene ID" value="ENSG00000119328.12"/>
</dbReference>
<dbReference type="GeneID" id="54942"/>
<dbReference type="KEGG" id="hsa:54942"/>
<dbReference type="MANE-Select" id="ENST00000322940.11">
    <property type="protein sequence ID" value="ENSP00000363753.3"/>
    <property type="RefSeq nucleotide sequence ID" value="NM_017832.4"/>
    <property type="RefSeq protein sequence ID" value="NP_060302.1"/>
</dbReference>
<dbReference type="UCSC" id="uc004bdn.4">
    <property type="organism name" value="human"/>
</dbReference>
<dbReference type="AGR" id="HGNC:1364"/>
<dbReference type="CTD" id="54942"/>
<dbReference type="DisGeNET" id="54942"/>
<dbReference type="GeneCards" id="ABITRAM"/>
<dbReference type="HGNC" id="HGNC:1364">
    <property type="gene designation" value="ABITRAM"/>
</dbReference>
<dbReference type="HPA" id="ENSG00000119328">
    <property type="expression patterns" value="Low tissue specificity"/>
</dbReference>
<dbReference type="MIM" id="620392">
    <property type="type" value="gene"/>
</dbReference>
<dbReference type="neXtProt" id="NX_Q9NX38"/>
<dbReference type="OpenTargets" id="ENSG00000119328"/>
<dbReference type="PharmGKB" id="PA25981"/>
<dbReference type="VEuPathDB" id="HostDB:ENSG00000119328"/>
<dbReference type="eggNOG" id="KOG3266">
    <property type="taxonomic scope" value="Eukaryota"/>
</dbReference>
<dbReference type="GeneTree" id="ENSGT00450000040303"/>
<dbReference type="HOGENOM" id="CLU_107323_1_0_1"/>
<dbReference type="InParanoid" id="Q9NX38"/>
<dbReference type="OMA" id="GKACEDH"/>
<dbReference type="OrthoDB" id="48130at2759"/>
<dbReference type="PAN-GO" id="Q9NX38">
    <property type="GO annotations" value="9 GO annotations based on evolutionary models"/>
</dbReference>
<dbReference type="PhylomeDB" id="Q9NX38"/>
<dbReference type="TreeFam" id="TF313930"/>
<dbReference type="PathwayCommons" id="Q9NX38"/>
<dbReference type="SignaLink" id="Q9NX38"/>
<dbReference type="BioGRID-ORCS" id="54942">
    <property type="hits" value="10 hits in 1152 CRISPR screens"/>
</dbReference>
<dbReference type="ChiTaRS" id="FAM206A">
    <property type="organism name" value="human"/>
</dbReference>
<dbReference type="GenomeRNAi" id="54942"/>
<dbReference type="Pharos" id="Q9NX38">
    <property type="development level" value="Tbio"/>
</dbReference>
<dbReference type="PRO" id="PR:Q9NX38"/>
<dbReference type="Proteomes" id="UP000005640">
    <property type="component" value="Chromosome 9"/>
</dbReference>
<dbReference type="RNAct" id="Q9NX38">
    <property type="molecule type" value="protein"/>
</dbReference>
<dbReference type="Bgee" id="ENSG00000119328">
    <property type="expression patterns" value="Expressed in bronchial epithelial cell and 206 other cell types or tissues"/>
</dbReference>
<dbReference type="ExpressionAtlas" id="Q9NX38">
    <property type="expression patterns" value="baseline and differential"/>
</dbReference>
<dbReference type="GO" id="GO:0030425">
    <property type="term" value="C:dendrite"/>
    <property type="evidence" value="ECO:0000318"/>
    <property type="project" value="GO_Central"/>
</dbReference>
<dbReference type="GO" id="GO:0032433">
    <property type="term" value="C:filopodium tip"/>
    <property type="evidence" value="ECO:0000250"/>
    <property type="project" value="UniProtKB"/>
</dbReference>
<dbReference type="GO" id="GO:0030426">
    <property type="term" value="C:growth cone"/>
    <property type="evidence" value="ECO:0000250"/>
    <property type="project" value="UniProtKB"/>
</dbReference>
<dbReference type="GO" id="GO:0030027">
    <property type="term" value="C:lamellipodium"/>
    <property type="evidence" value="ECO:0000250"/>
    <property type="project" value="UniProtKB"/>
</dbReference>
<dbReference type="GO" id="GO:0016607">
    <property type="term" value="C:nuclear speck"/>
    <property type="evidence" value="ECO:0007669"/>
    <property type="project" value="UniProtKB-SubCell"/>
</dbReference>
<dbReference type="GO" id="GO:0005634">
    <property type="term" value="C:nucleus"/>
    <property type="evidence" value="ECO:0000318"/>
    <property type="project" value="GO_Central"/>
</dbReference>
<dbReference type="GO" id="GO:0051015">
    <property type="term" value="F:actin filament binding"/>
    <property type="evidence" value="ECO:0000250"/>
    <property type="project" value="UniProtKB"/>
</dbReference>
<dbReference type="GO" id="GO:0003785">
    <property type="term" value="F:actin monomer binding"/>
    <property type="evidence" value="ECO:0000250"/>
    <property type="project" value="UniProtKB"/>
</dbReference>
<dbReference type="GO" id="GO:0048813">
    <property type="term" value="P:dendrite morphogenesis"/>
    <property type="evidence" value="ECO:0000250"/>
    <property type="project" value="UniProtKB"/>
</dbReference>
<dbReference type="GO" id="GO:0030833">
    <property type="term" value="P:regulation of actin filament polymerization"/>
    <property type="evidence" value="ECO:0000250"/>
    <property type="project" value="UniProtKB"/>
</dbReference>
<dbReference type="GO" id="GO:0051489">
    <property type="term" value="P:regulation of filopodium assembly"/>
    <property type="evidence" value="ECO:0000250"/>
    <property type="project" value="UniProtKB"/>
</dbReference>
<dbReference type="FunFam" id="2.40.50.100:FF:000048">
    <property type="entry name" value="Protein Abitram"/>
    <property type="match status" value="1"/>
</dbReference>
<dbReference type="Gene3D" id="2.40.50.100">
    <property type="match status" value="1"/>
</dbReference>
<dbReference type="InterPro" id="IPR039169">
    <property type="entry name" value="Abitram"/>
</dbReference>
<dbReference type="InterPro" id="IPR033753">
    <property type="entry name" value="GCV_H/Fam206"/>
</dbReference>
<dbReference type="InterPro" id="IPR011053">
    <property type="entry name" value="Single_hybrid_motif"/>
</dbReference>
<dbReference type="PANTHER" id="PTHR13651">
    <property type="entry name" value="PROTEIN ABITRAM"/>
    <property type="match status" value="1"/>
</dbReference>
<dbReference type="PANTHER" id="PTHR13651:SF0">
    <property type="entry name" value="PROTEIN ABITRAM"/>
    <property type="match status" value="1"/>
</dbReference>
<dbReference type="Pfam" id="PF01597">
    <property type="entry name" value="GCV_H"/>
    <property type="match status" value="1"/>
</dbReference>
<dbReference type="SUPFAM" id="SSF51230">
    <property type="entry name" value="Single hybrid motif"/>
    <property type="match status" value="1"/>
</dbReference>
<protein>
    <recommendedName>
        <fullName evidence="2">Protein Abitram</fullName>
    </recommendedName>
    <alternativeName>
        <fullName evidence="4">Actin-binding transcription modulator</fullName>
    </alternativeName>
    <alternativeName>
        <fullName evidence="2">Protein Simiate</fullName>
    </alternativeName>
</protein>
<gene>
    <name evidence="4" type="primary">ABITRAM</name>
    <name type="synonym">C9orf6</name>
    <name evidence="4" type="synonym">FAM206A</name>
</gene>
<keyword id="KW-0009">Actin-binding</keyword>
<keyword id="KW-0966">Cell projection</keyword>
<keyword id="KW-0539">Nucleus</keyword>
<keyword id="KW-1267">Proteomics identification</keyword>
<keyword id="KW-1185">Reference proteome</keyword>